<sequence length="197" mass="21249">MDMQSRIRQLFQASIDTKQQAMDVLAPHIEQASQVMVNALLNEGKMLSCGNGGSAGDAQHFSSELLNRFERERPSLPAIALTTDSSTITSIANDYSYNEVFSKQIRALGQPGDVLLAISTSGNSANIIQAIQAAHDREMIVVALTGRDGGGMASLLLPEDVEIRVPANVTARIQEVHLLAIHCLCDLIDSQLFGSEE</sequence>
<comment type="function">
    <text evidence="1">Catalyzes the isomerization of sedoheptulose 7-phosphate in D-glycero-D-manno-heptose 7-phosphate.</text>
</comment>
<comment type="catalytic activity">
    <reaction evidence="1">
        <text>2 D-sedoheptulose 7-phosphate = D-glycero-alpha-D-manno-heptose 7-phosphate + D-glycero-beta-D-manno-heptose 7-phosphate</text>
        <dbReference type="Rhea" id="RHEA:27489"/>
        <dbReference type="ChEBI" id="CHEBI:57483"/>
        <dbReference type="ChEBI" id="CHEBI:60203"/>
        <dbReference type="ChEBI" id="CHEBI:60204"/>
        <dbReference type="EC" id="5.3.1.28"/>
    </reaction>
</comment>
<comment type="cofactor">
    <cofactor evidence="1">
        <name>Zn(2+)</name>
        <dbReference type="ChEBI" id="CHEBI:29105"/>
    </cofactor>
    <text evidence="1">Binds 1 zinc ion per subunit.</text>
</comment>
<comment type="pathway">
    <text evidence="1">Carbohydrate biosynthesis; D-glycero-D-manno-heptose 7-phosphate biosynthesis; D-glycero-alpha-D-manno-heptose 7-phosphate and D-glycero-beta-D-manno-heptose 7-phosphate from sedoheptulose 7-phosphate: step 1/1.</text>
</comment>
<comment type="subunit">
    <text evidence="1">Homotetramer.</text>
</comment>
<comment type="subcellular location">
    <subcellularLocation>
        <location evidence="1">Cytoplasm</location>
    </subcellularLocation>
</comment>
<comment type="miscellaneous">
    <text evidence="1">The reaction produces a racemic mixture of D-glycero-alpha-D-manno-heptose 7-phosphate and D-glycero-beta-D-manno-heptose 7-phosphate.</text>
</comment>
<comment type="similarity">
    <text evidence="1">Belongs to the SIS family. GmhA subfamily.</text>
</comment>
<accession>Q3K731</accession>
<feature type="chain" id="PRO_1000009090" description="Phosphoheptose isomerase">
    <location>
        <begin position="1"/>
        <end position="197"/>
    </location>
</feature>
<feature type="domain" description="SIS" evidence="1">
    <location>
        <begin position="36"/>
        <end position="197"/>
    </location>
</feature>
<feature type="binding site" evidence="1">
    <location>
        <begin position="51"/>
        <end position="53"/>
    </location>
    <ligand>
        <name>substrate</name>
    </ligand>
</feature>
<feature type="binding site" evidence="1">
    <location>
        <position position="60"/>
    </location>
    <ligand>
        <name>Zn(2+)</name>
        <dbReference type="ChEBI" id="CHEBI:29105"/>
    </ligand>
</feature>
<feature type="binding site" evidence="1">
    <location>
        <position position="64"/>
    </location>
    <ligand>
        <name>substrate</name>
    </ligand>
</feature>
<feature type="binding site" evidence="1">
    <location>
        <position position="64"/>
    </location>
    <ligand>
        <name>Zn(2+)</name>
        <dbReference type="ChEBI" id="CHEBI:29105"/>
    </ligand>
</feature>
<feature type="binding site" evidence="1">
    <location>
        <begin position="93"/>
        <end position="94"/>
    </location>
    <ligand>
        <name>substrate</name>
    </ligand>
</feature>
<feature type="binding site" evidence="1">
    <location>
        <begin position="119"/>
        <end position="121"/>
    </location>
    <ligand>
        <name>substrate</name>
    </ligand>
</feature>
<feature type="binding site" evidence="1">
    <location>
        <position position="124"/>
    </location>
    <ligand>
        <name>substrate</name>
    </ligand>
</feature>
<feature type="binding site" evidence="1">
    <location>
        <position position="174"/>
    </location>
    <ligand>
        <name>substrate</name>
    </ligand>
</feature>
<feature type="binding site" evidence="1">
    <location>
        <position position="174"/>
    </location>
    <ligand>
        <name>Zn(2+)</name>
        <dbReference type="ChEBI" id="CHEBI:29105"/>
    </ligand>
</feature>
<feature type="binding site" evidence="1">
    <location>
        <position position="182"/>
    </location>
    <ligand>
        <name>Zn(2+)</name>
        <dbReference type="ChEBI" id="CHEBI:29105"/>
    </ligand>
</feature>
<organism>
    <name type="scientific">Pseudomonas fluorescens (strain Pf0-1)</name>
    <dbReference type="NCBI Taxonomy" id="205922"/>
    <lineage>
        <taxon>Bacteria</taxon>
        <taxon>Pseudomonadati</taxon>
        <taxon>Pseudomonadota</taxon>
        <taxon>Gammaproteobacteria</taxon>
        <taxon>Pseudomonadales</taxon>
        <taxon>Pseudomonadaceae</taxon>
        <taxon>Pseudomonas</taxon>
    </lineage>
</organism>
<evidence type="ECO:0000255" key="1">
    <source>
        <dbReference type="HAMAP-Rule" id="MF_00067"/>
    </source>
</evidence>
<gene>
    <name evidence="1" type="primary">gmhA</name>
    <name type="ordered locus">Pfl01_4686</name>
</gene>
<dbReference type="EC" id="5.3.1.28" evidence="1"/>
<dbReference type="EMBL" id="CP000094">
    <property type="protein sequence ID" value="ABA76423.1"/>
    <property type="molecule type" value="Genomic_DNA"/>
</dbReference>
<dbReference type="RefSeq" id="WP_007928463.1">
    <property type="nucleotide sequence ID" value="NC_007492.2"/>
</dbReference>
<dbReference type="SMR" id="Q3K731"/>
<dbReference type="KEGG" id="pfo:Pfl01_4686"/>
<dbReference type="eggNOG" id="COG0279">
    <property type="taxonomic scope" value="Bacteria"/>
</dbReference>
<dbReference type="HOGENOM" id="CLU_080999_3_1_6"/>
<dbReference type="UniPathway" id="UPA00041">
    <property type="reaction ID" value="UER00436"/>
</dbReference>
<dbReference type="Proteomes" id="UP000002704">
    <property type="component" value="Chromosome"/>
</dbReference>
<dbReference type="GO" id="GO:0005737">
    <property type="term" value="C:cytoplasm"/>
    <property type="evidence" value="ECO:0007669"/>
    <property type="project" value="UniProtKB-SubCell"/>
</dbReference>
<dbReference type="GO" id="GO:0097367">
    <property type="term" value="F:carbohydrate derivative binding"/>
    <property type="evidence" value="ECO:0007669"/>
    <property type="project" value="InterPro"/>
</dbReference>
<dbReference type="GO" id="GO:0008968">
    <property type="term" value="F:D-sedoheptulose 7-phosphate isomerase activity"/>
    <property type="evidence" value="ECO:0007669"/>
    <property type="project" value="UniProtKB-UniRule"/>
</dbReference>
<dbReference type="GO" id="GO:0008270">
    <property type="term" value="F:zinc ion binding"/>
    <property type="evidence" value="ECO:0007669"/>
    <property type="project" value="UniProtKB-UniRule"/>
</dbReference>
<dbReference type="GO" id="GO:0005975">
    <property type="term" value="P:carbohydrate metabolic process"/>
    <property type="evidence" value="ECO:0007669"/>
    <property type="project" value="UniProtKB-UniRule"/>
</dbReference>
<dbReference type="GO" id="GO:2001061">
    <property type="term" value="P:D-glycero-D-manno-heptose 7-phosphate biosynthetic process"/>
    <property type="evidence" value="ECO:0007669"/>
    <property type="project" value="UniProtKB-UniPathway"/>
</dbReference>
<dbReference type="CDD" id="cd05006">
    <property type="entry name" value="SIS_GmhA"/>
    <property type="match status" value="1"/>
</dbReference>
<dbReference type="Gene3D" id="3.40.50.10490">
    <property type="entry name" value="Glucose-6-phosphate isomerase like protein, domain 1"/>
    <property type="match status" value="1"/>
</dbReference>
<dbReference type="HAMAP" id="MF_00067">
    <property type="entry name" value="GmhA"/>
    <property type="match status" value="1"/>
</dbReference>
<dbReference type="InterPro" id="IPR035461">
    <property type="entry name" value="GmhA/DiaA"/>
</dbReference>
<dbReference type="InterPro" id="IPR004515">
    <property type="entry name" value="Phosphoheptose_Isoase"/>
</dbReference>
<dbReference type="InterPro" id="IPR001347">
    <property type="entry name" value="SIS_dom"/>
</dbReference>
<dbReference type="InterPro" id="IPR046348">
    <property type="entry name" value="SIS_dom_sf"/>
</dbReference>
<dbReference type="InterPro" id="IPR050099">
    <property type="entry name" value="SIS_GmhA/DiaA_subfam"/>
</dbReference>
<dbReference type="NCBIfam" id="NF010546">
    <property type="entry name" value="PRK13936.1"/>
    <property type="match status" value="1"/>
</dbReference>
<dbReference type="PANTHER" id="PTHR30390:SF6">
    <property type="entry name" value="DNAA INITIATOR-ASSOCIATING PROTEIN DIAA"/>
    <property type="match status" value="1"/>
</dbReference>
<dbReference type="PANTHER" id="PTHR30390">
    <property type="entry name" value="SEDOHEPTULOSE 7-PHOSPHATE ISOMERASE / DNAA INITIATOR-ASSOCIATING FACTOR FOR REPLICATION INITIATION"/>
    <property type="match status" value="1"/>
</dbReference>
<dbReference type="Pfam" id="PF13580">
    <property type="entry name" value="SIS_2"/>
    <property type="match status" value="1"/>
</dbReference>
<dbReference type="SUPFAM" id="SSF53697">
    <property type="entry name" value="SIS domain"/>
    <property type="match status" value="1"/>
</dbReference>
<dbReference type="PROSITE" id="PS51464">
    <property type="entry name" value="SIS"/>
    <property type="match status" value="1"/>
</dbReference>
<keyword id="KW-0119">Carbohydrate metabolism</keyword>
<keyword id="KW-0963">Cytoplasm</keyword>
<keyword id="KW-0413">Isomerase</keyword>
<keyword id="KW-0479">Metal-binding</keyword>
<keyword id="KW-0862">Zinc</keyword>
<proteinExistence type="inferred from homology"/>
<protein>
    <recommendedName>
        <fullName evidence="1">Phosphoheptose isomerase</fullName>
        <ecNumber evidence="1">5.3.1.28</ecNumber>
    </recommendedName>
    <alternativeName>
        <fullName evidence="1">Sedoheptulose 7-phosphate isomerase</fullName>
    </alternativeName>
</protein>
<name>GMHA_PSEPF</name>
<reference key="1">
    <citation type="journal article" date="2009" name="Genome Biol.">
        <title>Genomic and genetic analyses of diversity and plant interactions of Pseudomonas fluorescens.</title>
        <authorList>
            <person name="Silby M.W."/>
            <person name="Cerdeno-Tarraga A.M."/>
            <person name="Vernikos G.S."/>
            <person name="Giddens S.R."/>
            <person name="Jackson R.W."/>
            <person name="Preston G.M."/>
            <person name="Zhang X.-X."/>
            <person name="Moon C.D."/>
            <person name="Gehrig S.M."/>
            <person name="Godfrey S.A.C."/>
            <person name="Knight C.G."/>
            <person name="Malone J.G."/>
            <person name="Robinson Z."/>
            <person name="Spiers A.J."/>
            <person name="Harris S."/>
            <person name="Challis G.L."/>
            <person name="Yaxley A.M."/>
            <person name="Harris D."/>
            <person name="Seeger K."/>
            <person name="Murphy L."/>
            <person name="Rutter S."/>
            <person name="Squares R."/>
            <person name="Quail M.A."/>
            <person name="Saunders E."/>
            <person name="Mavromatis K."/>
            <person name="Brettin T.S."/>
            <person name="Bentley S.D."/>
            <person name="Hothersall J."/>
            <person name="Stephens E."/>
            <person name="Thomas C.M."/>
            <person name="Parkhill J."/>
            <person name="Levy S.B."/>
            <person name="Rainey P.B."/>
            <person name="Thomson N.R."/>
        </authorList>
    </citation>
    <scope>NUCLEOTIDE SEQUENCE [LARGE SCALE GENOMIC DNA]</scope>
    <source>
        <strain>Pf0-1</strain>
    </source>
</reference>